<name>RS8_BURCH</name>
<proteinExistence type="inferred from homology"/>
<protein>
    <recommendedName>
        <fullName evidence="1">Small ribosomal subunit protein uS8</fullName>
    </recommendedName>
    <alternativeName>
        <fullName evidence="2">30S ribosomal protein S8</fullName>
    </alternativeName>
</protein>
<gene>
    <name evidence="1" type="primary">rpsH</name>
    <name type="ordered locus">Bcen2424_0362</name>
</gene>
<comment type="function">
    <text evidence="1">One of the primary rRNA binding proteins, it binds directly to 16S rRNA central domain where it helps coordinate assembly of the platform of the 30S subunit.</text>
</comment>
<comment type="subunit">
    <text evidence="1">Part of the 30S ribosomal subunit. Contacts proteins S5 and S12.</text>
</comment>
<comment type="similarity">
    <text evidence="1">Belongs to the universal ribosomal protein uS8 family.</text>
</comment>
<sequence length="131" mass="14199">MSMSDPIADMLTRIRNAQMVEKVSVAMPSSKVKVAIAQVLKDEGYIDDFAVKAEGAKSELNIALKYYAGRPVIERLERVSKPGLRVYRGRNDIPQVMNGLGVAIVSTPKGVMTDRKARATGVGGEVICYVA</sequence>
<organism>
    <name type="scientific">Burkholderia cenocepacia (strain HI2424)</name>
    <dbReference type="NCBI Taxonomy" id="331272"/>
    <lineage>
        <taxon>Bacteria</taxon>
        <taxon>Pseudomonadati</taxon>
        <taxon>Pseudomonadota</taxon>
        <taxon>Betaproteobacteria</taxon>
        <taxon>Burkholderiales</taxon>
        <taxon>Burkholderiaceae</taxon>
        <taxon>Burkholderia</taxon>
        <taxon>Burkholderia cepacia complex</taxon>
    </lineage>
</organism>
<dbReference type="EMBL" id="CP000458">
    <property type="protein sequence ID" value="ABK07116.1"/>
    <property type="molecule type" value="Genomic_DNA"/>
</dbReference>
<dbReference type="RefSeq" id="WP_006477185.1">
    <property type="nucleotide sequence ID" value="NC_008542.1"/>
</dbReference>
<dbReference type="SMR" id="A0K3N9"/>
<dbReference type="GeneID" id="98107146"/>
<dbReference type="KEGG" id="bch:Bcen2424_0362"/>
<dbReference type="HOGENOM" id="CLU_098428_0_0_4"/>
<dbReference type="GO" id="GO:1990904">
    <property type="term" value="C:ribonucleoprotein complex"/>
    <property type="evidence" value="ECO:0007669"/>
    <property type="project" value="UniProtKB-KW"/>
</dbReference>
<dbReference type="GO" id="GO:0005840">
    <property type="term" value="C:ribosome"/>
    <property type="evidence" value="ECO:0007669"/>
    <property type="project" value="UniProtKB-KW"/>
</dbReference>
<dbReference type="GO" id="GO:0019843">
    <property type="term" value="F:rRNA binding"/>
    <property type="evidence" value="ECO:0007669"/>
    <property type="project" value="UniProtKB-UniRule"/>
</dbReference>
<dbReference type="GO" id="GO:0003735">
    <property type="term" value="F:structural constituent of ribosome"/>
    <property type="evidence" value="ECO:0007669"/>
    <property type="project" value="InterPro"/>
</dbReference>
<dbReference type="GO" id="GO:0006412">
    <property type="term" value="P:translation"/>
    <property type="evidence" value="ECO:0007669"/>
    <property type="project" value="UniProtKB-UniRule"/>
</dbReference>
<dbReference type="FunFam" id="3.30.1370.30:FF:000003">
    <property type="entry name" value="30S ribosomal protein S8"/>
    <property type="match status" value="1"/>
</dbReference>
<dbReference type="FunFam" id="3.30.1490.10:FF:000001">
    <property type="entry name" value="30S ribosomal protein S8"/>
    <property type="match status" value="1"/>
</dbReference>
<dbReference type="Gene3D" id="3.30.1370.30">
    <property type="match status" value="1"/>
</dbReference>
<dbReference type="Gene3D" id="3.30.1490.10">
    <property type="match status" value="1"/>
</dbReference>
<dbReference type="HAMAP" id="MF_01302_B">
    <property type="entry name" value="Ribosomal_uS8_B"/>
    <property type="match status" value="1"/>
</dbReference>
<dbReference type="InterPro" id="IPR000630">
    <property type="entry name" value="Ribosomal_uS8"/>
</dbReference>
<dbReference type="InterPro" id="IPR047863">
    <property type="entry name" value="Ribosomal_uS8_CS"/>
</dbReference>
<dbReference type="InterPro" id="IPR035987">
    <property type="entry name" value="Ribosomal_uS8_sf"/>
</dbReference>
<dbReference type="NCBIfam" id="NF001109">
    <property type="entry name" value="PRK00136.1"/>
    <property type="match status" value="1"/>
</dbReference>
<dbReference type="PANTHER" id="PTHR11758">
    <property type="entry name" value="40S RIBOSOMAL PROTEIN S15A"/>
    <property type="match status" value="1"/>
</dbReference>
<dbReference type="Pfam" id="PF00410">
    <property type="entry name" value="Ribosomal_S8"/>
    <property type="match status" value="1"/>
</dbReference>
<dbReference type="SUPFAM" id="SSF56047">
    <property type="entry name" value="Ribosomal protein S8"/>
    <property type="match status" value="1"/>
</dbReference>
<dbReference type="PROSITE" id="PS00053">
    <property type="entry name" value="RIBOSOMAL_S8"/>
    <property type="match status" value="1"/>
</dbReference>
<accession>A0K3N9</accession>
<evidence type="ECO:0000255" key="1">
    <source>
        <dbReference type="HAMAP-Rule" id="MF_01302"/>
    </source>
</evidence>
<evidence type="ECO:0000305" key="2"/>
<keyword id="KW-0687">Ribonucleoprotein</keyword>
<keyword id="KW-0689">Ribosomal protein</keyword>
<keyword id="KW-0694">RNA-binding</keyword>
<keyword id="KW-0699">rRNA-binding</keyword>
<reference key="1">
    <citation type="submission" date="2006-08" db="EMBL/GenBank/DDBJ databases">
        <title>Complete sequence of chromosome 1 of Burkholderia cenocepacia HI2424.</title>
        <authorList>
            <person name="Copeland A."/>
            <person name="Lucas S."/>
            <person name="Lapidus A."/>
            <person name="Barry K."/>
            <person name="Detter J.C."/>
            <person name="Glavina del Rio T."/>
            <person name="Hammon N."/>
            <person name="Israni S."/>
            <person name="Pitluck S."/>
            <person name="Chain P."/>
            <person name="Malfatti S."/>
            <person name="Shin M."/>
            <person name="Vergez L."/>
            <person name="Schmutz J."/>
            <person name="Larimer F."/>
            <person name="Land M."/>
            <person name="Hauser L."/>
            <person name="Kyrpides N."/>
            <person name="Kim E."/>
            <person name="LiPuma J.J."/>
            <person name="Gonzalez C.F."/>
            <person name="Konstantinidis K."/>
            <person name="Tiedje J.M."/>
            <person name="Richardson P."/>
        </authorList>
    </citation>
    <scope>NUCLEOTIDE SEQUENCE [LARGE SCALE GENOMIC DNA]</scope>
    <source>
        <strain>HI2424</strain>
    </source>
</reference>
<feature type="chain" id="PRO_0000290812" description="Small ribosomal subunit protein uS8">
    <location>
        <begin position="1"/>
        <end position="131"/>
    </location>
</feature>